<protein>
    <recommendedName>
        <fullName>Homeobox-leucine zipper protein ATHB-52</fullName>
    </recommendedName>
    <alternativeName>
        <fullName>HD-ZIP protein ATHB-52</fullName>
    </alternativeName>
    <alternativeName>
        <fullName>Homeodomain transcription factor ATHB-52</fullName>
    </alternativeName>
</protein>
<sequence length="156" mass="17934">MENSQSQGKNKKKRLTQDQVRQLEKCFTMNKKLEPDLKLQLSNQLGLPQRQVAVWFQNKRARFKTQSLEVQHCTLQSKHEAALSDKAKLEHQVQFLQDELKRARNQLALFTNQDSPVDNSNLGSCDEDHDDQVVVFDELYACFVSNGHGSSSTSWV</sequence>
<proteinExistence type="evidence at transcript level"/>
<gene>
    <name type="primary">ATHB-52</name>
    <name type="ordered locus">At5g53980</name>
    <name type="ORF">K19P17.15</name>
</gene>
<comment type="function">
    <text evidence="1">Probable transcription factor.</text>
</comment>
<comment type="subcellular location">
    <subcellularLocation>
        <location evidence="4">Nucleus</location>
    </subcellularLocation>
</comment>
<comment type="tissue specificity">
    <text evidence="3">Expressed in roots and flowers.</text>
</comment>
<comment type="similarity">
    <text evidence="4">Belongs to the HD-ZIP homeobox family. Class I subfamily.</text>
</comment>
<keyword id="KW-0238">DNA-binding</keyword>
<keyword id="KW-0371">Homeobox</keyword>
<keyword id="KW-0539">Nucleus</keyword>
<keyword id="KW-1185">Reference proteome</keyword>
<keyword id="KW-0804">Transcription</keyword>
<keyword id="KW-0805">Transcription regulation</keyword>
<evidence type="ECO:0000250" key="1"/>
<evidence type="ECO:0000255" key="2">
    <source>
        <dbReference type="PROSITE-ProRule" id="PRU00108"/>
    </source>
</evidence>
<evidence type="ECO:0000269" key="3">
    <source>
    </source>
</evidence>
<evidence type="ECO:0000305" key="4"/>
<dbReference type="EMBL" id="AB007644">
    <property type="protein sequence ID" value="BAB10728.1"/>
    <property type="molecule type" value="Genomic_DNA"/>
</dbReference>
<dbReference type="EMBL" id="CP002688">
    <property type="protein sequence ID" value="AED96435.1"/>
    <property type="molecule type" value="Genomic_DNA"/>
</dbReference>
<dbReference type="EMBL" id="BT015927">
    <property type="protein sequence ID" value="AAV31157.1"/>
    <property type="molecule type" value="mRNA"/>
</dbReference>
<dbReference type="EMBL" id="BT021920">
    <property type="protein sequence ID" value="AAX49369.1"/>
    <property type="molecule type" value="mRNA"/>
</dbReference>
<dbReference type="EMBL" id="AK229211">
    <property type="protein sequence ID" value="BAF01080.1"/>
    <property type="molecule type" value="mRNA"/>
</dbReference>
<dbReference type="SMR" id="Q9FN29"/>
<dbReference type="FunCoup" id="Q9FN29">
    <property type="interactions" value="42"/>
</dbReference>
<dbReference type="STRING" id="3702.Q9FN29"/>
<dbReference type="PaxDb" id="3702-AT5G53980.1"/>
<dbReference type="EnsemblPlants" id="AT5G53980.1">
    <property type="protein sequence ID" value="AT5G53980.1"/>
    <property type="gene ID" value="AT5G53980"/>
</dbReference>
<dbReference type="GeneID" id="835481"/>
<dbReference type="Gramene" id="AT5G53980.1">
    <property type="protein sequence ID" value="AT5G53980.1"/>
    <property type="gene ID" value="AT5G53980"/>
</dbReference>
<dbReference type="KEGG" id="ath:AT5G53980"/>
<dbReference type="Araport" id="AT5G53980"/>
<dbReference type="TAIR" id="AT5G53980">
    <property type="gene designation" value="HB52"/>
</dbReference>
<dbReference type="eggNOG" id="KOG0483">
    <property type="taxonomic scope" value="Eukaryota"/>
</dbReference>
<dbReference type="HOGENOM" id="CLU_1550312_0_0_1"/>
<dbReference type="InParanoid" id="Q9FN29"/>
<dbReference type="OMA" id="HDQSKHN"/>
<dbReference type="OrthoDB" id="6159439at2759"/>
<dbReference type="PhylomeDB" id="Q9FN29"/>
<dbReference type="PRO" id="PR:Q9FN29"/>
<dbReference type="Proteomes" id="UP000006548">
    <property type="component" value="Chromosome 5"/>
</dbReference>
<dbReference type="ExpressionAtlas" id="Q9FN29">
    <property type="expression patterns" value="baseline and differential"/>
</dbReference>
<dbReference type="GO" id="GO:0005634">
    <property type="term" value="C:nucleus"/>
    <property type="evidence" value="ECO:0007669"/>
    <property type="project" value="UniProtKB-SubCell"/>
</dbReference>
<dbReference type="GO" id="GO:0003700">
    <property type="term" value="F:DNA-binding transcription factor activity"/>
    <property type="evidence" value="ECO:0000250"/>
    <property type="project" value="TAIR"/>
</dbReference>
<dbReference type="GO" id="GO:0000981">
    <property type="term" value="F:DNA-binding transcription factor activity, RNA polymerase II-specific"/>
    <property type="evidence" value="ECO:0007669"/>
    <property type="project" value="InterPro"/>
</dbReference>
<dbReference type="GO" id="GO:0000976">
    <property type="term" value="F:transcription cis-regulatory region binding"/>
    <property type="evidence" value="ECO:0000353"/>
    <property type="project" value="TAIR"/>
</dbReference>
<dbReference type="GO" id="GO:0009646">
    <property type="term" value="P:response to absence of light"/>
    <property type="evidence" value="ECO:0000270"/>
    <property type="project" value="TAIR"/>
</dbReference>
<dbReference type="GO" id="GO:0009637">
    <property type="term" value="P:response to blue light"/>
    <property type="evidence" value="ECO:0000270"/>
    <property type="project" value="TAIR"/>
</dbReference>
<dbReference type="CDD" id="cd00086">
    <property type="entry name" value="homeodomain"/>
    <property type="match status" value="1"/>
</dbReference>
<dbReference type="FunFam" id="1.10.10.60:FF:000533">
    <property type="entry name" value="Homeobox-leucine zipper protein ATHB-52"/>
    <property type="match status" value="1"/>
</dbReference>
<dbReference type="Gene3D" id="1.10.10.60">
    <property type="entry name" value="Homeodomain-like"/>
    <property type="match status" value="1"/>
</dbReference>
<dbReference type="InterPro" id="IPR001356">
    <property type="entry name" value="HD"/>
</dbReference>
<dbReference type="InterPro" id="IPR045224">
    <property type="entry name" value="HDZip_class_I_plant"/>
</dbReference>
<dbReference type="InterPro" id="IPR017970">
    <property type="entry name" value="Homeobox_CS"/>
</dbReference>
<dbReference type="InterPro" id="IPR009057">
    <property type="entry name" value="Homeodomain-like_sf"/>
</dbReference>
<dbReference type="PANTHER" id="PTHR24326">
    <property type="entry name" value="HOMEOBOX-LEUCINE ZIPPER PROTEIN"/>
    <property type="match status" value="1"/>
</dbReference>
<dbReference type="PANTHER" id="PTHR24326:SF522">
    <property type="entry name" value="HOMEOBOX-LEUCINE ZIPPER PROTEIN ATHB-52"/>
    <property type="match status" value="1"/>
</dbReference>
<dbReference type="Pfam" id="PF00046">
    <property type="entry name" value="Homeodomain"/>
    <property type="match status" value="1"/>
</dbReference>
<dbReference type="SMART" id="SM00389">
    <property type="entry name" value="HOX"/>
    <property type="match status" value="1"/>
</dbReference>
<dbReference type="SUPFAM" id="SSF46689">
    <property type="entry name" value="Homeodomain-like"/>
    <property type="match status" value="1"/>
</dbReference>
<dbReference type="PROSITE" id="PS00027">
    <property type="entry name" value="HOMEOBOX_1"/>
    <property type="match status" value="1"/>
</dbReference>
<dbReference type="PROSITE" id="PS50071">
    <property type="entry name" value="HOMEOBOX_2"/>
    <property type="match status" value="1"/>
</dbReference>
<feature type="chain" id="PRO_0000257803" description="Homeobox-leucine zipper protein ATHB-52">
    <location>
        <begin position="1"/>
        <end position="156"/>
    </location>
</feature>
<feature type="DNA-binding region" description="Homeobox" evidence="2">
    <location>
        <begin position="8"/>
        <end position="67"/>
    </location>
</feature>
<feature type="region of interest" description="Leucine-zipper">
    <location>
        <begin position="68"/>
        <end position="96"/>
    </location>
</feature>
<reference key="1">
    <citation type="journal article" date="1997" name="DNA Res.">
        <title>Structural analysis of Arabidopsis thaliana chromosome 5. III. Sequence features of the regions of 1,191,918 bp covered by seventeen physically assigned P1 clones.</title>
        <authorList>
            <person name="Nakamura Y."/>
            <person name="Sato S."/>
            <person name="Kaneko T."/>
            <person name="Kotani H."/>
            <person name="Asamizu E."/>
            <person name="Miyajima N."/>
            <person name="Tabata S."/>
        </authorList>
    </citation>
    <scope>NUCLEOTIDE SEQUENCE [LARGE SCALE GENOMIC DNA]</scope>
    <source>
        <strain>cv. Columbia</strain>
    </source>
</reference>
<reference key="2">
    <citation type="journal article" date="2017" name="Plant J.">
        <title>Araport11: a complete reannotation of the Arabidopsis thaliana reference genome.</title>
        <authorList>
            <person name="Cheng C.Y."/>
            <person name="Krishnakumar V."/>
            <person name="Chan A.P."/>
            <person name="Thibaud-Nissen F."/>
            <person name="Schobel S."/>
            <person name="Town C.D."/>
        </authorList>
    </citation>
    <scope>GENOME REANNOTATION</scope>
    <source>
        <strain>cv. Columbia</strain>
    </source>
</reference>
<reference key="3">
    <citation type="submission" date="2005-03" db="EMBL/GenBank/DDBJ databases">
        <title>Arabidopsis ORF clones.</title>
        <authorList>
            <person name="Kim C.J."/>
            <person name="Chen H."/>
            <person name="Cheuk R.F."/>
            <person name="Shinn P."/>
            <person name="Ecker J.R."/>
        </authorList>
    </citation>
    <scope>NUCLEOTIDE SEQUENCE [LARGE SCALE MRNA]</scope>
    <source>
        <strain>cv. Columbia</strain>
    </source>
</reference>
<reference key="4">
    <citation type="submission" date="2006-07" db="EMBL/GenBank/DDBJ databases">
        <title>Large-scale analysis of RIKEN Arabidopsis full-length (RAFL) cDNAs.</title>
        <authorList>
            <person name="Totoki Y."/>
            <person name="Seki M."/>
            <person name="Ishida J."/>
            <person name="Nakajima M."/>
            <person name="Enju A."/>
            <person name="Kamiya A."/>
            <person name="Narusaka M."/>
            <person name="Shin-i T."/>
            <person name="Nakagawa M."/>
            <person name="Sakamoto N."/>
            <person name="Oishi K."/>
            <person name="Kohara Y."/>
            <person name="Kobayashi M."/>
            <person name="Toyoda A."/>
            <person name="Sakaki Y."/>
            <person name="Sakurai T."/>
            <person name="Iida K."/>
            <person name="Akiyama K."/>
            <person name="Satou M."/>
            <person name="Toyoda T."/>
            <person name="Konagaya A."/>
            <person name="Carninci P."/>
            <person name="Kawai J."/>
            <person name="Hayashizaki Y."/>
            <person name="Shinozaki K."/>
        </authorList>
    </citation>
    <scope>NUCLEOTIDE SEQUENCE [LARGE SCALE MRNA]</scope>
    <source>
        <strain>cv. Columbia</strain>
    </source>
</reference>
<reference key="5">
    <citation type="journal article" date="2005" name="Plant Physiol.">
        <title>Homeodomain leucine zipper class I genes in Arabidopsis. Expression patterns and phylogenetic relationships.</title>
        <authorList>
            <person name="Henriksson E."/>
            <person name="Olsson A.S.B."/>
            <person name="Johannesson H."/>
            <person name="Johansson H."/>
            <person name="Hanson J."/>
            <person name="Engstroem P."/>
            <person name="Soederman E."/>
        </authorList>
    </citation>
    <scope>GENE FAMILY</scope>
    <scope>TISSUE SPECIFICITY</scope>
</reference>
<organism>
    <name type="scientific">Arabidopsis thaliana</name>
    <name type="common">Mouse-ear cress</name>
    <dbReference type="NCBI Taxonomy" id="3702"/>
    <lineage>
        <taxon>Eukaryota</taxon>
        <taxon>Viridiplantae</taxon>
        <taxon>Streptophyta</taxon>
        <taxon>Embryophyta</taxon>
        <taxon>Tracheophyta</taxon>
        <taxon>Spermatophyta</taxon>
        <taxon>Magnoliopsida</taxon>
        <taxon>eudicotyledons</taxon>
        <taxon>Gunneridae</taxon>
        <taxon>Pentapetalae</taxon>
        <taxon>rosids</taxon>
        <taxon>malvids</taxon>
        <taxon>Brassicales</taxon>
        <taxon>Brassicaceae</taxon>
        <taxon>Camelineae</taxon>
        <taxon>Arabidopsis</taxon>
    </lineage>
</organism>
<accession>Q9FN29</accession>
<name>ATB52_ARATH</name>